<protein>
    <recommendedName>
        <fullName>DVA-1 polyprotein</fullName>
    </recommendedName>
    <alternativeName>
        <fullName>Allergen 1</fullName>
    </alternativeName>
    <alternativeName>
        <fullName>Antigen 1</fullName>
    </alternativeName>
    <alternativeName>
        <fullName>Nematode polyprotein allergen DVA-1</fullName>
        <shortName>NPA DVA-1</shortName>
    </alternativeName>
    <component>
        <recommendedName>
            <fullName>DVA-1 unit A</fullName>
        </recommendedName>
    </component>
    <component>
        <recommendedName>
            <fullName>DVA-1 unit B</fullName>
        </recommendedName>
    </component>
    <component>
        <recommendedName>
            <fullName>DVA-1 unit C</fullName>
        </recommendedName>
    </component>
    <component>
        <recommendedName>
            <fullName>DVA-1 unit D</fullName>
        </recommendedName>
    </component>
    <component>
        <recommendedName>
            <fullName>DVA-1 unit E</fullName>
        </recommendedName>
    </component>
    <component>
        <recommendedName>
            <fullName>DVA-1 unit F</fullName>
        </recommendedName>
    </component>
    <component>
        <recommendedName>
            <fullName>DVA-1 unit G</fullName>
        </recommendedName>
    </component>
    <component>
        <recommendedName>
            <fullName>DVA-1 unit H</fullName>
        </recommendedName>
    </component>
    <component>
        <recommendedName>
            <fullName>DVA-1 unit I</fullName>
        </recommendedName>
    </component>
    <component>
        <recommendedName>
            <fullName>DVA-1 unit J</fullName>
        </recommendedName>
    </component>
    <component>
        <recommendedName>
            <fullName>DVA-1 unit K</fullName>
        </recommendedName>
    </component>
    <component>
        <recommendedName>
            <fullName>DVA-1 unit L</fullName>
        </recommendedName>
    </component>
    <component>
        <recommendedName>
            <fullName>C-terminal extension peptide</fullName>
        </recommendedName>
    </component>
</protein>
<keyword id="KW-0020">Allergen</keyword>
<keyword id="KW-0165">Cleavage on pair of basic residues</keyword>
<keyword id="KW-0325">Glycoprotein</keyword>
<keyword id="KW-0446">Lipid-binding</keyword>
<keyword id="KW-0677">Repeat</keyword>
<keyword id="KW-0683">Retinol-binding</keyword>
<keyword id="KW-0732">Signal</keyword>
<evidence type="ECO:0000255" key="1"/>
<evidence type="ECO:0000305" key="2"/>
<organism>
    <name type="scientific">Dictyocaulus viviparus</name>
    <name type="common">Bovine lungworm</name>
    <dbReference type="NCBI Taxonomy" id="29172"/>
    <lineage>
        <taxon>Eukaryota</taxon>
        <taxon>Metazoa</taxon>
        <taxon>Ecdysozoa</taxon>
        <taxon>Nematoda</taxon>
        <taxon>Chromadorea</taxon>
        <taxon>Rhabditida</taxon>
        <taxon>Rhabditina</taxon>
        <taxon>Rhabditomorpha</taxon>
        <taxon>Strongyloidea</taxon>
        <taxon>Metastrongylidae</taxon>
        <taxon>Dictyocaulus</taxon>
    </lineage>
</organism>
<reference key="1">
    <citation type="journal article" date="1995" name="Mol. Biochem. Parasitol.">
        <title>Extensive diversity in repeat unit sequences of the cDNA encoding the polyprotein antigen/allergen from the bovine lungworm Dictyocaulus viviparus.</title>
        <authorList>
            <person name="Britton C."/>
            <person name="Moore J."/>
            <person name="Gilleard J.S."/>
            <person name="Kennedy M.W."/>
        </authorList>
    </citation>
    <scope>NUCLEOTIDE SEQUENCE [MRNA]</scope>
</reference>
<reference key="2">
    <citation type="journal article" date="1995" name="J. Biol. Chem.">
        <title>The DvA-1 polyprotein of the parasitic nematode Dictyocaulus viviparus. A small helix-rich lipid-binding protein.</title>
        <authorList>
            <person name="Kennedy M.W."/>
            <person name="Britton C."/>
            <person name="Price N.C."/>
            <person name="Kelly S.M."/>
            <person name="Cooper A."/>
        </authorList>
    </citation>
    <scope>FATTY ACID/RETINOID-BINDING</scope>
</reference>
<comment type="function">
    <text>Has high binding affinity for fatty acids and retinoids.</text>
</comment>
<comment type="PTM">
    <text>Nematode polyprotein allergens (NPAs) are synthesized as large polypeptides that are subsequently proteolytically cleaved to active polypeptide units.</text>
</comment>
<comment type="allergen">
    <text>Causes an allergic reaction in human.</text>
</comment>
<comment type="similarity">
    <text evidence="2">Belongs to the NPA family.</text>
</comment>
<proteinExistence type="evidence at protein level"/>
<accession>Q24702</accession>
<name>DVA1_DICVI</name>
<gene>
    <name type="primary">DVA-1</name>
</gene>
<dbReference type="EMBL" id="U02568">
    <property type="protein sequence ID" value="AAC47403.1"/>
    <property type="molecule type" value="mRNA"/>
</dbReference>
<dbReference type="PIR" id="T18412">
    <property type="entry name" value="T18412"/>
</dbReference>
<dbReference type="SMR" id="Q24702"/>
<dbReference type="GlyCosmos" id="Q24702">
    <property type="glycosylation" value="1 site, No reported glycans"/>
</dbReference>
<dbReference type="GO" id="GO:0019841">
    <property type="term" value="F:retinol binding"/>
    <property type="evidence" value="ECO:0007669"/>
    <property type="project" value="UniProtKB-KW"/>
</dbReference>
<dbReference type="Gene3D" id="1.10.533.30">
    <property type="entry name" value="Nematode polyprotein allergen ABA-1"/>
    <property type="match status" value="12"/>
</dbReference>
<dbReference type="InterPro" id="IPR032487">
    <property type="entry name" value="ABA-1_nematode"/>
</dbReference>
<dbReference type="InterPro" id="IPR053280">
    <property type="entry name" value="Aerolysin-like_pore-former"/>
</dbReference>
<dbReference type="InterPro" id="IPR016024">
    <property type="entry name" value="ARM-type_fold"/>
</dbReference>
<dbReference type="InterPro" id="IPR038289">
    <property type="entry name" value="DVA-1_sf"/>
</dbReference>
<dbReference type="PANTHER" id="PTHR34007">
    <property type="entry name" value="AEROLYSIN-LIKE PROTEIN-RELATED"/>
    <property type="match status" value="1"/>
</dbReference>
<dbReference type="PANTHER" id="PTHR34007:SF1">
    <property type="entry name" value="AEROLYSIN-LIKE PROTEIN-RELATED"/>
    <property type="match status" value="1"/>
</dbReference>
<dbReference type="Pfam" id="PF16469">
    <property type="entry name" value="NPA"/>
    <property type="match status" value="12"/>
</dbReference>
<dbReference type="SUPFAM" id="SSF48371">
    <property type="entry name" value="ARM repeat"/>
    <property type="match status" value="1"/>
</dbReference>
<feature type="signal peptide" evidence="1">
    <location>
        <begin position="1"/>
        <end position="21"/>
    </location>
</feature>
<feature type="propeptide" id="PRO_0000042229">
    <location>
        <begin position="22"/>
        <end position="60"/>
    </location>
</feature>
<feature type="peptide" id="PRO_0000021130" description="DVA-1 unit A" evidence="1">
    <location>
        <begin position="61"/>
        <end position="213"/>
    </location>
</feature>
<feature type="peptide" id="PRO_0000021131" description="DVA-1 unit B" evidence="1">
    <location>
        <begin position="214"/>
        <end position="334"/>
    </location>
</feature>
<feature type="peptide" id="PRO_0000021132" description="DVA-1 unit C" evidence="1">
    <location>
        <begin position="335"/>
        <end position="480"/>
    </location>
</feature>
<feature type="peptide" id="PRO_0000021133" description="DVA-1 unit D" evidence="1">
    <location>
        <begin position="481"/>
        <end position="606"/>
    </location>
</feature>
<feature type="peptide" id="PRO_0000021134" description="DVA-1 unit E" evidence="1">
    <location>
        <begin position="607"/>
        <end position="737"/>
    </location>
</feature>
<feature type="peptide" id="PRO_0000021135" description="DVA-1 unit F" evidence="1">
    <location>
        <begin position="738"/>
        <end position="869"/>
    </location>
</feature>
<feature type="peptide" id="PRO_0000021136" description="DVA-1 unit G" evidence="1">
    <location>
        <begin position="870"/>
        <end position="1003"/>
    </location>
</feature>
<feature type="peptide" id="PRO_0000021137" description="DVA-1 unit H" evidence="1">
    <location>
        <begin position="1004"/>
        <end position="1074"/>
    </location>
</feature>
<feature type="peptide" id="PRO_0000021138" description="DVA-1 unit I" evidence="1">
    <location>
        <begin position="1075"/>
        <end position="1208"/>
    </location>
</feature>
<feature type="peptide" id="PRO_0000021139" description="DVA-1 unit J" evidence="1">
    <location>
        <begin position="1209"/>
        <end position="1342"/>
    </location>
</feature>
<feature type="peptide" id="PRO_0000021140" description="DVA-1 unit K" evidence="1">
    <location>
        <begin position="1343"/>
        <end position="1475"/>
    </location>
</feature>
<feature type="peptide" id="PRO_0000021141" description="DVA-1 unit L" evidence="1">
    <location>
        <begin position="1476"/>
        <end position="1545"/>
    </location>
</feature>
<feature type="peptide" id="PRO_0000021142" description="C-terminal extension peptide" evidence="1">
    <location>
        <begin position="1546"/>
        <end position="1557"/>
    </location>
</feature>
<feature type="glycosylation site" description="N-linked (GlcNAc...) asparagine" evidence="1">
    <location>
        <position position="997"/>
    </location>
</feature>
<feature type="sequence variant">
    <original>H</original>
    <variation>Y</variation>
    <location>
        <position position="946"/>
    </location>
</feature>
<feature type="sequence variant">
    <original>L</original>
    <variation>V</variation>
    <location>
        <position position="948"/>
    </location>
</feature>
<feature type="sequence variant">
    <original>H</original>
    <variation>D</variation>
    <location>
        <position position="955"/>
    </location>
</feature>
<feature type="sequence variant">
    <original>E</original>
    <variation>G</variation>
    <location>
        <position position="974"/>
    </location>
</feature>
<feature type="sequence variant">
    <original>G</original>
    <variation>A</variation>
    <location>
        <position position="990"/>
    </location>
</feature>
<feature type="sequence variant">
    <original>A</original>
    <variation>V</variation>
    <location>
        <position position="1543"/>
    </location>
</feature>
<sequence>MKSTSFITLLLLSYFIVEAHSSIFHWDDERLFKHDDTHSWLTDVQKAELETLKHQPIQLRDKTLEFYNQLPTNEKAIWDKFYTKYCVVWLKEVASDEEIGKLKELESEKNKEALLTSIYSFKDRLDEVDQRKVELWKETCDEYVTKGLSRKRRDSNKNFEEFIYWMTDEQKQSMNDMKTAGKSFNEIHKEGRKYFKALTIDKQSSLKEQFKDKCKKYFMQIANSDEVEKIKSLNDDEIRHVVKNAVARLNGEDKEFAVKMETLCEDVLAFKARKNDIDDKINRRLSWMTDEQKQVVKQLYADGRSQADIRAKIFEFLSSIDGPAGVAAKAQIQKECYKWMEEVATAEEIAALHELHEIDHDGCRRKVREFIGRLPEDRKLEVEKDLPFCEKIWYRDHGDHNSHKHGAHHHHRHLAVRRRRHLYAIEKFLDWLKPEQKHELEKIENSGAHFDDVIAEVKKFYGLLPEEKKIELKAKFKSQCYDWVKEVATSEEMNDIMKMHESKNHSDLMKRLTELENRLTEDQKHTIEHVREVCLGLWEVQNTNKQHKQSLEEAMDAYLSWMTDEDKEKVKAIYETSNRQTFYDEILKIMESSEDEVKAKATEKLEAACKHYGTNILGEENVDIIREMKKNGATFEEISNRVDELIEGITDSDRKEKAYRMSKLCKKIYSLGHSKQLQQYDFENVLQKYLTWLDDSQKNELRTMSDNKEKIYKKIIDYFDGTIGEVKEKAVEELQLACNHYIKSIVGEEKAMEIKQLKEEGKSSEEIAKKVEDVINQISDESIRSRADEALLVCKRIFGIVKRLRRDNSEIHSLEEAMERYLTWLSDDQKIVIKSIYDVNDRKVLYEKIMEFFDDAIGETKQKAAKELKDACKHYVKDLIGEENGNLLREMKENGASNEAIATKVEEMIEAITDETKRAQAMRASTSCRKVYGVVQRFRRDHHHEHNLDEALEKHFTWLNEEQKSQLKTIYESEDREALHKKVWEFFEAGAGLRASNASKKIYGVAKRFRRDHHHEHNLDEALEKYLTWLNEEQKSQMKTIYESGDREALYKKVLEFFEAATGEVKEKAAVELKSACRHYIKDYIGDEKAEKIKEMKESGVSTEEISKKVDEFIAMITDDEKKAKALRASSACKKIYGVAKRFRRDHHHEHNLEEALEKYLTWLNEEQKSQMKTIYESGDREALYKKVLEFFEAATGEVKEKAAVELKSACRHYIKDYIGDEKAEKIKEMKESGVSTEEISKKVDEFIAMITDDEKKAKALRASNACKKIYGVAKRLRRDHHHEHNLEEAMGKYLSWMSDEQQAQVKKIYGTGDRLATYNKVMELFESVPSDEKEKATSQLKAACRHYIKDFIGKDNLAVIKEMKESGATNEAIGEKIDEFIAGLDDEQKKAQAQRAASACKKIYGVKSRKRREHYEIDVDEAISKYLTWLNEEQKAEIKQLKEKDEKQTIGKKIMEFFELTSGDDKEKAREQLKAACKHYVKMYVGEEKAAELKKLKDSGISLEEMSKKVTETIETIEDEAVRAKARRIHSYCQRIFGITKARRHLAMKHHRFYDD</sequence>